<sequence>MKRTWQPNRRKRAKTHGFRARMKTKSGRKVLKRRRQKGRHRLTV</sequence>
<organism>
    <name type="scientific">Thermus filiformis</name>
    <dbReference type="NCBI Taxonomy" id="276"/>
    <lineage>
        <taxon>Bacteria</taxon>
        <taxon>Thermotogati</taxon>
        <taxon>Deinococcota</taxon>
        <taxon>Deinococci</taxon>
        <taxon>Thermales</taxon>
        <taxon>Thermaceae</taxon>
        <taxon>Thermus</taxon>
    </lineage>
</organism>
<comment type="subunit">
    <text>Part of the 50S ribosomal subunit.</text>
</comment>
<comment type="miscellaneous">
    <text>The open reading frame (ORF) for this protein is entirely within the ORF for the RNase P protein (RnaP). The two start codons are separated by four nucleotides.</text>
</comment>
<comment type="similarity">
    <text evidence="1">Belongs to the bacterial ribosomal protein bL34 family.</text>
</comment>
<proteinExistence type="inferred from homology"/>
<gene>
    <name evidence="1" type="primary">rpmH</name>
</gene>
<accession>Q7X5L3</accession>
<reference key="1">
    <citation type="journal article" date="2003" name="Proc. Natl. Acad. Sci. U.S.A.">
        <title>An unusual mechanism of bacterial gene expression revealed for the RNase P protein of Thermus strains.</title>
        <authorList>
            <person name="Feltens R."/>
            <person name="Gossringer M."/>
            <person name="Willkomm D.K."/>
            <person name="Urlaub H."/>
            <person name="Hartmann R.K."/>
        </authorList>
    </citation>
    <scope>NUCLEOTIDE SEQUENCE [GENOMIC DNA]</scope>
    <source>
        <strain>Tok4A2</strain>
    </source>
</reference>
<feature type="chain" id="PRO_0000187489" description="Large ribosomal subunit protein bL34">
    <location>
        <begin position="1"/>
        <end position="44"/>
    </location>
</feature>
<feature type="region of interest" description="Disordered" evidence="2">
    <location>
        <begin position="1"/>
        <end position="44"/>
    </location>
</feature>
<name>RL34_THEFI</name>
<evidence type="ECO:0000255" key="1">
    <source>
        <dbReference type="HAMAP-Rule" id="MF_00391"/>
    </source>
</evidence>
<evidence type="ECO:0000256" key="2">
    <source>
        <dbReference type="SAM" id="MobiDB-lite"/>
    </source>
</evidence>
<evidence type="ECO:0000305" key="3"/>
<protein>
    <recommendedName>
        <fullName evidence="1">Large ribosomal subunit protein bL34</fullName>
    </recommendedName>
    <alternativeName>
        <fullName evidence="3">50S ribosomal protein L34</fullName>
    </alternativeName>
</protein>
<keyword id="KW-0687">Ribonucleoprotein</keyword>
<keyword id="KW-0689">Ribosomal protein</keyword>
<dbReference type="EMBL" id="AY256339">
    <property type="protein sequence ID" value="AAO88970.1"/>
    <property type="molecule type" value="Genomic_DNA"/>
</dbReference>
<dbReference type="SMR" id="Q7X5L3"/>
<dbReference type="STRING" id="276.THFILI_01300"/>
<dbReference type="GO" id="GO:1990904">
    <property type="term" value="C:ribonucleoprotein complex"/>
    <property type="evidence" value="ECO:0007669"/>
    <property type="project" value="UniProtKB-KW"/>
</dbReference>
<dbReference type="GO" id="GO:0005840">
    <property type="term" value="C:ribosome"/>
    <property type="evidence" value="ECO:0007669"/>
    <property type="project" value="UniProtKB-KW"/>
</dbReference>
<dbReference type="GO" id="GO:0003735">
    <property type="term" value="F:structural constituent of ribosome"/>
    <property type="evidence" value="ECO:0007669"/>
    <property type="project" value="InterPro"/>
</dbReference>
<dbReference type="GO" id="GO:0006412">
    <property type="term" value="P:translation"/>
    <property type="evidence" value="ECO:0007669"/>
    <property type="project" value="UniProtKB-UniRule"/>
</dbReference>
<dbReference type="FunFam" id="1.10.287.3980:FF:000001">
    <property type="entry name" value="Mitochondrial ribosomal protein L34"/>
    <property type="match status" value="1"/>
</dbReference>
<dbReference type="Gene3D" id="1.10.287.3980">
    <property type="match status" value="1"/>
</dbReference>
<dbReference type="HAMAP" id="MF_00391">
    <property type="entry name" value="Ribosomal_bL34"/>
    <property type="match status" value="1"/>
</dbReference>
<dbReference type="InterPro" id="IPR000271">
    <property type="entry name" value="Ribosomal_bL34"/>
</dbReference>
<dbReference type="InterPro" id="IPR020939">
    <property type="entry name" value="Ribosomal_bL34_CS"/>
</dbReference>
<dbReference type="NCBIfam" id="TIGR01030">
    <property type="entry name" value="rpmH_bact"/>
    <property type="match status" value="1"/>
</dbReference>
<dbReference type="PANTHER" id="PTHR14503:SF4">
    <property type="entry name" value="LARGE RIBOSOMAL SUBUNIT PROTEIN BL34M"/>
    <property type="match status" value="1"/>
</dbReference>
<dbReference type="PANTHER" id="PTHR14503">
    <property type="entry name" value="MITOCHONDRIAL RIBOSOMAL PROTEIN 34 FAMILY MEMBER"/>
    <property type="match status" value="1"/>
</dbReference>
<dbReference type="Pfam" id="PF00468">
    <property type="entry name" value="Ribosomal_L34"/>
    <property type="match status" value="1"/>
</dbReference>
<dbReference type="PROSITE" id="PS00784">
    <property type="entry name" value="RIBOSOMAL_L34"/>
    <property type="match status" value="1"/>
</dbReference>